<comment type="function">
    <text evidence="2">Catalyzes the oxidative decarboxylation of isocitrate to 2-oxoglutarate and carbon dioxide with the concomitant reduction of NADP(+).</text>
</comment>
<comment type="catalytic activity">
    <reaction evidence="2">
        <text>D-threo-isocitrate + NADP(+) = 2-oxoglutarate + CO2 + NADPH</text>
        <dbReference type="Rhea" id="RHEA:19629"/>
        <dbReference type="ChEBI" id="CHEBI:15562"/>
        <dbReference type="ChEBI" id="CHEBI:16526"/>
        <dbReference type="ChEBI" id="CHEBI:16810"/>
        <dbReference type="ChEBI" id="CHEBI:57783"/>
        <dbReference type="ChEBI" id="CHEBI:58349"/>
        <dbReference type="EC" id="1.1.1.42"/>
    </reaction>
</comment>
<comment type="cofactor">
    <cofactor evidence="1">
        <name>Mg(2+)</name>
        <dbReference type="ChEBI" id="CHEBI:18420"/>
    </cofactor>
    <cofactor evidence="1">
        <name>Mn(2+)</name>
        <dbReference type="ChEBI" id="CHEBI:29035"/>
    </cofactor>
    <text evidence="1">Binds 1 Mg(2+) or Mn(2+) ion per subunit.</text>
</comment>
<comment type="biophysicochemical properties">
    <temperatureDependence>
        <text evidence="2">Optimum temperature is 70-80 degrees Celsius (PubMed:8951037). Thermostable (PubMed:8951037).</text>
    </temperatureDependence>
</comment>
<comment type="subunit">
    <text evidence="1">Homodimer.</text>
</comment>
<comment type="similarity">
    <text evidence="4">Belongs to the isocitrate and isopropylmalate dehydrogenases family.</text>
</comment>
<dbReference type="EC" id="1.1.1.42" evidence="2"/>
<dbReference type="EMBL" id="D86855">
    <property type="protein sequence ID" value="BAA13177.2"/>
    <property type="molecule type" value="Genomic_DNA"/>
</dbReference>
<dbReference type="PIR" id="T44658">
    <property type="entry name" value="T44658"/>
</dbReference>
<dbReference type="SMR" id="P96318"/>
<dbReference type="BRENDA" id="1.1.1.42">
    <property type="organism ID" value="1058"/>
</dbReference>
<dbReference type="GO" id="GO:0004450">
    <property type="term" value="F:isocitrate dehydrogenase (NADP+) activity"/>
    <property type="evidence" value="ECO:0007669"/>
    <property type="project" value="UniProtKB-EC"/>
</dbReference>
<dbReference type="GO" id="GO:0000287">
    <property type="term" value="F:magnesium ion binding"/>
    <property type="evidence" value="ECO:0007669"/>
    <property type="project" value="InterPro"/>
</dbReference>
<dbReference type="GO" id="GO:0051287">
    <property type="term" value="F:NAD binding"/>
    <property type="evidence" value="ECO:0007669"/>
    <property type="project" value="InterPro"/>
</dbReference>
<dbReference type="GO" id="GO:0006097">
    <property type="term" value="P:glyoxylate cycle"/>
    <property type="evidence" value="ECO:0007669"/>
    <property type="project" value="UniProtKB-KW"/>
</dbReference>
<dbReference type="GO" id="GO:0006099">
    <property type="term" value="P:tricarboxylic acid cycle"/>
    <property type="evidence" value="ECO:0007669"/>
    <property type="project" value="UniProtKB-KW"/>
</dbReference>
<dbReference type="Gene3D" id="3.40.718.10">
    <property type="entry name" value="Isopropylmalate Dehydrogenase"/>
    <property type="match status" value="1"/>
</dbReference>
<dbReference type="InterPro" id="IPR019818">
    <property type="entry name" value="IsoCit/isopropylmalate_DH_CS"/>
</dbReference>
<dbReference type="InterPro" id="IPR004439">
    <property type="entry name" value="Isocitrate_DH_NADP_dimer_prok"/>
</dbReference>
<dbReference type="InterPro" id="IPR024084">
    <property type="entry name" value="IsoPropMal-DH-like_dom"/>
</dbReference>
<dbReference type="NCBIfam" id="NF005036">
    <property type="entry name" value="PRK06451.1"/>
    <property type="match status" value="1"/>
</dbReference>
<dbReference type="PANTHER" id="PTHR43504">
    <property type="entry name" value="ISOCITRATE DEHYDROGENASE [NADP]"/>
    <property type="match status" value="1"/>
</dbReference>
<dbReference type="PANTHER" id="PTHR43504:SF1">
    <property type="entry name" value="ISOCITRATE DEHYDROGENASE [NADP]"/>
    <property type="match status" value="1"/>
</dbReference>
<dbReference type="Pfam" id="PF00180">
    <property type="entry name" value="Iso_dh"/>
    <property type="match status" value="1"/>
</dbReference>
<dbReference type="SMART" id="SM01329">
    <property type="entry name" value="Iso_dh"/>
    <property type="match status" value="1"/>
</dbReference>
<dbReference type="SUPFAM" id="SSF53659">
    <property type="entry name" value="Isocitrate/Isopropylmalate dehydrogenase-like"/>
    <property type="match status" value="1"/>
</dbReference>
<dbReference type="PROSITE" id="PS00470">
    <property type="entry name" value="IDH_IMDH"/>
    <property type="match status" value="1"/>
</dbReference>
<organism>
    <name type="scientific">Caldococcus noboribetus</name>
    <dbReference type="NCBI Taxonomy" id="57174"/>
    <lineage>
        <taxon>Archaea</taxon>
        <taxon>Thermoproteota</taxon>
        <taxon>Thermoprotei</taxon>
        <taxon>Desulfurococcales</taxon>
        <taxon>Caldococcus</taxon>
    </lineage>
</organism>
<proteinExistence type="evidence at protein level"/>
<reference key="1">
    <citation type="journal article" date="1996" name="Arch. Biochem. Biophys.">
        <title>Eubacteria-type isocitrate dehydrogenase from an Archaeon: cloning, sequencing, and expression of a gene encoding isocitrate dehydrogenase from a hyperthermophilic archaebacterium Caldococcus noboribetus.</title>
        <authorList>
            <person name="Aoshima M."/>
            <person name="Yamagishi A."/>
            <person name="Oshima T."/>
        </authorList>
    </citation>
    <scope>NUCLEOTIDE SEQUENCE [GENOMIC DNA]</scope>
    <scope>FUNCTION</scope>
    <scope>CATALYTIC ACTIVITY</scope>
    <scope>BIOPHYSICOCHEMICAL PROPERTIES</scope>
    <source>
        <strain>NC12</strain>
    </source>
</reference>
<name>IDH_CALNO</name>
<gene>
    <name type="primary">icd</name>
</gene>
<evidence type="ECO:0000250" key="1">
    <source>
        <dbReference type="UniProtKB" id="P08200"/>
    </source>
</evidence>
<evidence type="ECO:0000269" key="2">
    <source>
    </source>
</evidence>
<evidence type="ECO:0000303" key="3">
    <source>
    </source>
</evidence>
<evidence type="ECO:0000305" key="4"/>
<protein>
    <recommendedName>
        <fullName evidence="3">Isocitrate dehydrogenase [NADP]</fullName>
        <shortName evidence="3">ICDH</shortName>
        <shortName>IDH</shortName>
        <ecNumber evidence="2">1.1.1.42</ecNumber>
    </recommendedName>
    <alternativeName>
        <fullName>IDP</fullName>
    </alternativeName>
    <alternativeName>
        <fullName>NADP(+)-specific ICDH</fullName>
    </alternativeName>
    <alternativeName>
        <fullName>Oxalosuccinate decarboxylase</fullName>
    </alternativeName>
</protein>
<keyword id="KW-0329">Glyoxylate bypass</keyword>
<keyword id="KW-0460">Magnesium</keyword>
<keyword id="KW-0464">Manganese</keyword>
<keyword id="KW-0479">Metal-binding</keyword>
<keyword id="KW-0521">NADP</keyword>
<keyword id="KW-0560">Oxidoreductase</keyword>
<keyword id="KW-0816">Tricarboxylic acid cycle</keyword>
<feature type="chain" id="PRO_0000083573" description="Isocitrate dehydrogenase [NADP]">
    <location>
        <begin position="1"/>
        <end position="429"/>
    </location>
</feature>
<feature type="binding site" evidence="1">
    <location>
        <position position="108"/>
    </location>
    <ligand>
        <name>NADP(+)</name>
        <dbReference type="ChEBI" id="CHEBI:58349"/>
    </ligand>
</feature>
<feature type="binding site" evidence="1">
    <location>
        <position position="117"/>
    </location>
    <ligand>
        <name>D-threo-isocitrate</name>
        <dbReference type="ChEBI" id="CHEBI:15562"/>
    </ligand>
</feature>
<feature type="binding site" evidence="1">
    <location>
        <position position="119"/>
    </location>
    <ligand>
        <name>D-threo-isocitrate</name>
        <dbReference type="ChEBI" id="CHEBI:15562"/>
    </ligand>
</feature>
<feature type="binding site" evidence="1">
    <location>
        <position position="123"/>
    </location>
    <ligand>
        <name>D-threo-isocitrate</name>
        <dbReference type="ChEBI" id="CHEBI:15562"/>
    </ligand>
</feature>
<feature type="binding site" evidence="1">
    <location>
        <position position="133"/>
    </location>
    <ligand>
        <name>D-threo-isocitrate</name>
        <dbReference type="ChEBI" id="CHEBI:15562"/>
    </ligand>
</feature>
<feature type="binding site" evidence="1">
    <location>
        <position position="156"/>
    </location>
    <ligand>
        <name>D-threo-isocitrate</name>
        <dbReference type="ChEBI" id="CHEBI:15562"/>
    </ligand>
</feature>
<feature type="binding site" evidence="1">
    <location>
        <position position="308"/>
    </location>
    <ligand>
        <name>Mg(2+)</name>
        <dbReference type="ChEBI" id="CHEBI:18420"/>
    </ligand>
</feature>
<feature type="binding site" evidence="1">
    <location>
        <begin position="340"/>
        <end position="346"/>
    </location>
    <ligand>
        <name>NADP(+)</name>
        <dbReference type="ChEBI" id="CHEBI:58349"/>
    </ligand>
</feature>
<feature type="binding site" evidence="1">
    <location>
        <position position="353"/>
    </location>
    <ligand>
        <name>NADP(+)</name>
        <dbReference type="ChEBI" id="CHEBI:58349"/>
    </ligand>
</feature>
<feature type="binding site" evidence="1">
    <location>
        <position position="393"/>
    </location>
    <ligand>
        <name>NADP(+)</name>
        <dbReference type="ChEBI" id="CHEBI:58349"/>
    </ligand>
</feature>
<feature type="binding site" evidence="1">
    <location>
        <position position="397"/>
    </location>
    <ligand>
        <name>NADP(+)</name>
        <dbReference type="ChEBI" id="CHEBI:58349"/>
    </ligand>
</feature>
<feature type="site" description="Critical for catalysis" evidence="1">
    <location>
        <position position="163"/>
    </location>
</feature>
<feature type="site" description="Critical for catalysis" evidence="1">
    <location>
        <position position="230"/>
    </location>
</feature>
<sequence>MVSHPCTADEAKPPSEGQLARFENGKLIVPDNLIVAYFKGDGIGPEIVESAKKVLDAAVDKAYGGTRRIVWWEVTAGEEAQKECGSLLPDGTLQAFKLARVNLKGPLTTPVGGGFRSLNVTLRMVLDLYSNVRPVKWYGQPTPHCHPENIDWVIFRENTEDVYAGIEWPFDSPEAQKIRDFLKKEFGIELTPDTGIGIKPISKWRTQRHVRRAMEWAIRNGYKHVTIMHKGNIMKYTEGAFRQWAYDLILSEFRDYVVTEEEVNTKYGGKAPEGKIIVNDRIADNMLQQIITRPGEYNVIVTPNLNGDYISDEANALVGGIGMAAGLDMGDGIAVAEPVHGSAPKYAGKNVINPTAEILSGMYLLSDFVGWPEVKLLVEYAVKQAIAHKQVTYDLAREMGGVTPISTTEYTDVLVDYIRHADLKALKGQ</sequence>
<accession>P96318</accession>